<name>HRCA_ACIC1</name>
<organism>
    <name type="scientific">Acidothermus cellulolyticus (strain ATCC 43068 / DSM 8971 / 11B)</name>
    <dbReference type="NCBI Taxonomy" id="351607"/>
    <lineage>
        <taxon>Bacteria</taxon>
        <taxon>Bacillati</taxon>
        <taxon>Actinomycetota</taxon>
        <taxon>Actinomycetes</taxon>
        <taxon>Acidothermales</taxon>
        <taxon>Acidothermaceae</taxon>
        <taxon>Acidothermus</taxon>
    </lineage>
</organism>
<feature type="chain" id="PRO_1000010371" description="Heat-inducible transcription repressor HrcA">
    <location>
        <begin position="1"/>
        <end position="339"/>
    </location>
</feature>
<reference key="1">
    <citation type="journal article" date="2009" name="Genome Res.">
        <title>Complete genome of the cellulolytic thermophile Acidothermus cellulolyticus 11B provides insights into its ecophysiological and evolutionary adaptations.</title>
        <authorList>
            <person name="Barabote R.D."/>
            <person name="Xie G."/>
            <person name="Leu D.H."/>
            <person name="Normand P."/>
            <person name="Necsulea A."/>
            <person name="Daubin V."/>
            <person name="Medigue C."/>
            <person name="Adney W.S."/>
            <person name="Xu X.C."/>
            <person name="Lapidus A."/>
            <person name="Parales R.E."/>
            <person name="Detter C."/>
            <person name="Pujic P."/>
            <person name="Bruce D."/>
            <person name="Lavire C."/>
            <person name="Challacombe J.F."/>
            <person name="Brettin T.S."/>
            <person name="Berry A.M."/>
        </authorList>
    </citation>
    <scope>NUCLEOTIDE SEQUENCE [LARGE SCALE GENOMIC DNA]</scope>
    <source>
        <strain>ATCC 43068 / DSM 8971 / 11B</strain>
    </source>
</reference>
<gene>
    <name evidence="1" type="primary">hrcA</name>
    <name type="ordered locus">Acel_0783</name>
</gene>
<keyword id="KW-1185">Reference proteome</keyword>
<keyword id="KW-0678">Repressor</keyword>
<keyword id="KW-0346">Stress response</keyword>
<keyword id="KW-0804">Transcription</keyword>
<keyword id="KW-0805">Transcription regulation</keyword>
<evidence type="ECO:0000255" key="1">
    <source>
        <dbReference type="HAMAP-Rule" id="MF_00081"/>
    </source>
</evidence>
<proteinExistence type="inferred from homology"/>
<protein>
    <recommendedName>
        <fullName evidence="1">Heat-inducible transcription repressor HrcA</fullName>
    </recommendedName>
</protein>
<accession>A0LSZ6</accession>
<dbReference type="EMBL" id="CP000481">
    <property type="protein sequence ID" value="ABK52556.1"/>
    <property type="molecule type" value="Genomic_DNA"/>
</dbReference>
<dbReference type="RefSeq" id="WP_011719619.1">
    <property type="nucleotide sequence ID" value="NC_008578.1"/>
</dbReference>
<dbReference type="SMR" id="A0LSZ6"/>
<dbReference type="STRING" id="351607.Acel_0783"/>
<dbReference type="KEGG" id="ace:Acel_0783"/>
<dbReference type="eggNOG" id="COG1420">
    <property type="taxonomic scope" value="Bacteria"/>
</dbReference>
<dbReference type="HOGENOM" id="CLU_050019_2_0_11"/>
<dbReference type="InParanoid" id="A0LSZ6"/>
<dbReference type="OrthoDB" id="9783139at2"/>
<dbReference type="Proteomes" id="UP000008221">
    <property type="component" value="Chromosome"/>
</dbReference>
<dbReference type="GO" id="GO:0003677">
    <property type="term" value="F:DNA binding"/>
    <property type="evidence" value="ECO:0007669"/>
    <property type="project" value="InterPro"/>
</dbReference>
<dbReference type="GO" id="GO:0045892">
    <property type="term" value="P:negative regulation of DNA-templated transcription"/>
    <property type="evidence" value="ECO:0007669"/>
    <property type="project" value="UniProtKB-UniRule"/>
</dbReference>
<dbReference type="FunFam" id="1.10.10.10:FF:000049">
    <property type="entry name" value="Heat-inducible transcription repressor HrcA"/>
    <property type="match status" value="1"/>
</dbReference>
<dbReference type="Gene3D" id="3.30.450.40">
    <property type="match status" value="1"/>
</dbReference>
<dbReference type="Gene3D" id="3.30.390.60">
    <property type="entry name" value="Heat-inducible transcription repressor hrca homolog, domain 3"/>
    <property type="match status" value="1"/>
</dbReference>
<dbReference type="Gene3D" id="1.10.10.10">
    <property type="entry name" value="Winged helix-like DNA-binding domain superfamily/Winged helix DNA-binding domain"/>
    <property type="match status" value="1"/>
</dbReference>
<dbReference type="HAMAP" id="MF_00081">
    <property type="entry name" value="HrcA"/>
    <property type="match status" value="1"/>
</dbReference>
<dbReference type="InterPro" id="IPR029016">
    <property type="entry name" value="GAF-like_dom_sf"/>
</dbReference>
<dbReference type="InterPro" id="IPR002571">
    <property type="entry name" value="HrcA"/>
</dbReference>
<dbReference type="InterPro" id="IPR021153">
    <property type="entry name" value="HrcA_C"/>
</dbReference>
<dbReference type="InterPro" id="IPR036388">
    <property type="entry name" value="WH-like_DNA-bd_sf"/>
</dbReference>
<dbReference type="InterPro" id="IPR036390">
    <property type="entry name" value="WH_DNA-bd_sf"/>
</dbReference>
<dbReference type="InterPro" id="IPR023120">
    <property type="entry name" value="WHTH_transcript_rep_HrcA_IDD"/>
</dbReference>
<dbReference type="NCBIfam" id="TIGR00331">
    <property type="entry name" value="hrcA"/>
    <property type="match status" value="1"/>
</dbReference>
<dbReference type="PANTHER" id="PTHR34824">
    <property type="entry name" value="HEAT-INDUCIBLE TRANSCRIPTION REPRESSOR HRCA"/>
    <property type="match status" value="1"/>
</dbReference>
<dbReference type="PANTHER" id="PTHR34824:SF1">
    <property type="entry name" value="HEAT-INDUCIBLE TRANSCRIPTION REPRESSOR HRCA"/>
    <property type="match status" value="1"/>
</dbReference>
<dbReference type="Pfam" id="PF01628">
    <property type="entry name" value="HrcA"/>
    <property type="match status" value="1"/>
</dbReference>
<dbReference type="PIRSF" id="PIRSF005485">
    <property type="entry name" value="HrcA"/>
    <property type="match status" value="1"/>
</dbReference>
<dbReference type="SUPFAM" id="SSF55781">
    <property type="entry name" value="GAF domain-like"/>
    <property type="match status" value="1"/>
</dbReference>
<dbReference type="SUPFAM" id="SSF46785">
    <property type="entry name" value="Winged helix' DNA-binding domain"/>
    <property type="match status" value="1"/>
</dbReference>
<sequence length="339" mass="36934">MLDERKLEVLRAIVEDFVSTNEPVGSKALVERHHLKVSPATVRNDMAALEDEGYIVQPHTSAGRVPTKKGYRLFVDRLSTIKPLSVAERRAIEHFLAGAVDLDDVISRTVRLLAQLTRQVAVVQYPTLDRSAVRHLELIRLSGTRVLLVVITDTGRVEQRQIDLPGELEETDTAELRNRLNAAIAGKRVVDVPDLLATFADGEPPARRSAATAIVSAVLDALVIRRDERVVVGGAANLARFPTDFPESVQPVLEALEEQVVLIRLLGEATRPSEVLVRIGEEDVHEGLRSTAVVSSAYGSKGRALASLGVVGPMRMDYPTTMAAVAAVARYVGRILAEN</sequence>
<comment type="function">
    <text evidence="1">Negative regulator of class I heat shock genes (grpE-dnaK-dnaJ and groELS operons). Prevents heat-shock induction of these operons.</text>
</comment>
<comment type="similarity">
    <text evidence="1">Belongs to the HrcA family.</text>
</comment>